<organism>
    <name type="scientific">Saccharomyces cerevisiae (strain ATCC 204508 / S288c)</name>
    <name type="common">Baker's yeast</name>
    <dbReference type="NCBI Taxonomy" id="559292"/>
    <lineage>
        <taxon>Eukaryota</taxon>
        <taxon>Fungi</taxon>
        <taxon>Dikarya</taxon>
        <taxon>Ascomycota</taxon>
        <taxon>Saccharomycotina</taxon>
        <taxon>Saccharomycetes</taxon>
        <taxon>Saccharomycetales</taxon>
        <taxon>Saccharomycetaceae</taxon>
        <taxon>Saccharomyces</taxon>
    </lineage>
</organism>
<proteinExistence type="evidence at protein level"/>
<name>CDS1_YEAST</name>
<keyword id="KW-0968">Cytoplasmic vesicle</keyword>
<keyword id="KW-0256">Endoplasmic reticulum</keyword>
<keyword id="KW-0444">Lipid biosynthesis</keyword>
<keyword id="KW-0443">Lipid metabolism</keyword>
<keyword id="KW-0460">Magnesium</keyword>
<keyword id="KW-0472">Membrane</keyword>
<keyword id="KW-0548">Nucleotidyltransferase</keyword>
<keyword id="KW-0594">Phospholipid biosynthesis</keyword>
<keyword id="KW-1208">Phospholipid metabolism</keyword>
<keyword id="KW-1185">Reference proteome</keyword>
<keyword id="KW-0808">Transferase</keyword>
<keyword id="KW-0812">Transmembrane</keyword>
<keyword id="KW-1133">Transmembrane helix</keyword>
<feature type="chain" id="PRO_0000090722" description="Phosphatidate cytidylyltransferase">
    <location>
        <begin position="1"/>
        <end position="457"/>
    </location>
</feature>
<feature type="transmembrane region" description="Helical" evidence="1">
    <location>
        <begin position="71"/>
        <end position="91"/>
    </location>
</feature>
<feature type="transmembrane region" description="Helical" evidence="1">
    <location>
        <begin position="154"/>
        <end position="174"/>
    </location>
</feature>
<feature type="transmembrane region" description="Helical" evidence="1">
    <location>
        <begin position="188"/>
        <end position="208"/>
    </location>
</feature>
<feature type="transmembrane region" description="Helical" evidence="1">
    <location>
        <begin position="214"/>
        <end position="234"/>
    </location>
</feature>
<feature type="transmembrane region" description="Helical" evidence="1">
    <location>
        <begin position="255"/>
        <end position="275"/>
    </location>
</feature>
<feature type="transmembrane region" description="Helical" evidence="1">
    <location>
        <begin position="330"/>
        <end position="350"/>
    </location>
</feature>
<feature type="mutagenesis site" description="Reduced enzyme level." evidence="4">
    <original>C</original>
    <variation>Y</variation>
    <location>
        <position position="102"/>
    </location>
</feature>
<accession>P38221</accession>
<accession>D6VQ30</accession>
<protein>
    <recommendedName>
        <fullName>Phosphatidate cytidylyltransferase</fullName>
        <ecNumber>2.7.7.41</ecNumber>
    </recommendedName>
    <alternativeName>
        <fullName>CDP-diacylglycerol synthase</fullName>
        <shortName>CDP-DAG synthase</shortName>
        <shortName>CDS</shortName>
    </alternativeName>
    <alternativeName>
        <fullName>CDP-diglyceride pyrophosphorylase</fullName>
    </alternativeName>
    <alternativeName>
        <fullName>CDP-diglyceride synthase</fullName>
        <shortName>CDP-DG synthase</shortName>
    </alternativeName>
    <alternativeName>
        <fullName>CTP:phosphatidate cytidylyltransferase</fullName>
    </alternativeName>
</protein>
<dbReference type="EC" id="2.7.7.41"/>
<dbReference type="EMBL" id="X76078">
    <property type="protein sequence ID" value="CAA53685.1"/>
    <property type="molecule type" value="Genomic_DNA"/>
</dbReference>
<dbReference type="EMBL" id="Z35898">
    <property type="protein sequence ID" value="CAA84971.1"/>
    <property type="molecule type" value="Genomic_DNA"/>
</dbReference>
<dbReference type="EMBL" id="AY693074">
    <property type="protein sequence ID" value="AAT93093.1"/>
    <property type="molecule type" value="Genomic_DNA"/>
</dbReference>
<dbReference type="EMBL" id="BK006936">
    <property type="protein sequence ID" value="DAA07150.1"/>
    <property type="molecule type" value="Genomic_DNA"/>
</dbReference>
<dbReference type="PIR" id="S45885">
    <property type="entry name" value="S45885"/>
</dbReference>
<dbReference type="RefSeq" id="NP_009585.1">
    <property type="nucleotide sequence ID" value="NM_001178377.1"/>
</dbReference>
<dbReference type="SMR" id="P38221"/>
<dbReference type="BioGRID" id="32731">
    <property type="interactions" value="258"/>
</dbReference>
<dbReference type="DIP" id="DIP-7898N"/>
<dbReference type="FunCoup" id="P38221">
    <property type="interactions" value="905"/>
</dbReference>
<dbReference type="IntAct" id="P38221">
    <property type="interactions" value="10"/>
</dbReference>
<dbReference type="MINT" id="P38221"/>
<dbReference type="STRING" id="4932.YBR029C"/>
<dbReference type="SwissLipids" id="SLP:000000050"/>
<dbReference type="iPTMnet" id="P38221"/>
<dbReference type="PaxDb" id="4932-YBR029C"/>
<dbReference type="PeptideAtlas" id="P38221"/>
<dbReference type="EnsemblFungi" id="YBR029C_mRNA">
    <property type="protein sequence ID" value="YBR029C"/>
    <property type="gene ID" value="YBR029C"/>
</dbReference>
<dbReference type="GeneID" id="852317"/>
<dbReference type="KEGG" id="sce:YBR029C"/>
<dbReference type="AGR" id="SGD:S000000233"/>
<dbReference type="SGD" id="S000000233">
    <property type="gene designation" value="CDS1"/>
</dbReference>
<dbReference type="VEuPathDB" id="FungiDB:YBR029C"/>
<dbReference type="eggNOG" id="KOG1440">
    <property type="taxonomic scope" value="Eukaryota"/>
</dbReference>
<dbReference type="GeneTree" id="ENSGT00940000170268"/>
<dbReference type="HOGENOM" id="CLU_023471_1_1_1"/>
<dbReference type="InParanoid" id="P38221"/>
<dbReference type="OMA" id="FFAYMYF"/>
<dbReference type="OrthoDB" id="10260889at2759"/>
<dbReference type="BioCyc" id="MetaCyc:YBR029C-MONOMER"/>
<dbReference type="BioCyc" id="YEAST:YBR029C-MONOMER"/>
<dbReference type="BRENDA" id="2.7.7.41">
    <property type="organism ID" value="984"/>
</dbReference>
<dbReference type="Reactome" id="R-SCE-1483148">
    <property type="pathway name" value="Synthesis of PG"/>
</dbReference>
<dbReference type="Reactome" id="R-SCE-1483226">
    <property type="pathway name" value="Synthesis of PI"/>
</dbReference>
<dbReference type="UniPathway" id="UPA00557">
    <property type="reaction ID" value="UER00614"/>
</dbReference>
<dbReference type="BioGRID-ORCS" id="852317">
    <property type="hits" value="5 hits in 10 CRISPR screens"/>
</dbReference>
<dbReference type="PRO" id="PR:P38221"/>
<dbReference type="Proteomes" id="UP000002311">
    <property type="component" value="Chromosome II"/>
</dbReference>
<dbReference type="RNAct" id="P38221">
    <property type="molecule type" value="protein"/>
</dbReference>
<dbReference type="GO" id="GO:0005783">
    <property type="term" value="C:endoplasmic reticulum"/>
    <property type="evidence" value="ECO:0000314"/>
    <property type="project" value="SGD"/>
</dbReference>
<dbReference type="GO" id="GO:0005789">
    <property type="term" value="C:endoplasmic reticulum membrane"/>
    <property type="evidence" value="ECO:0000318"/>
    <property type="project" value="GO_Central"/>
</dbReference>
<dbReference type="GO" id="GO:0070319">
    <property type="term" value="C:Golgi to plasma membrane transport vesicle"/>
    <property type="evidence" value="ECO:0000314"/>
    <property type="project" value="SGD"/>
</dbReference>
<dbReference type="GO" id="GO:0004605">
    <property type="term" value="F:phosphatidate cytidylyltransferase activity"/>
    <property type="evidence" value="ECO:0000314"/>
    <property type="project" value="SGD"/>
</dbReference>
<dbReference type="GO" id="GO:0016024">
    <property type="term" value="P:CDP-diacylglycerol biosynthetic process"/>
    <property type="evidence" value="ECO:0000315"/>
    <property type="project" value="SGD"/>
</dbReference>
<dbReference type="GO" id="GO:0046488">
    <property type="term" value="P:phosphatidylinositol metabolic process"/>
    <property type="evidence" value="ECO:0000315"/>
    <property type="project" value="SGD"/>
</dbReference>
<dbReference type="GO" id="GO:0006658">
    <property type="term" value="P:phosphatidylserine metabolic process"/>
    <property type="evidence" value="ECO:0000315"/>
    <property type="project" value="SGD"/>
</dbReference>
<dbReference type="InterPro" id="IPR000374">
    <property type="entry name" value="PC_trans"/>
</dbReference>
<dbReference type="InterPro" id="IPR016720">
    <property type="entry name" value="PC_Trfase_euk"/>
</dbReference>
<dbReference type="PANTHER" id="PTHR13773">
    <property type="entry name" value="PHOSPHATIDATE CYTIDYLYLTRANSFERASE"/>
    <property type="match status" value="1"/>
</dbReference>
<dbReference type="PANTHER" id="PTHR13773:SF8">
    <property type="entry name" value="PHOSPHATIDATE CYTIDYLYLTRANSFERASE, PHOTORECEPTOR-SPECIFIC"/>
    <property type="match status" value="1"/>
</dbReference>
<dbReference type="Pfam" id="PF01148">
    <property type="entry name" value="CTP_transf_1"/>
    <property type="match status" value="1"/>
</dbReference>
<dbReference type="PIRSF" id="PIRSF018269">
    <property type="entry name" value="PC_trans_euk"/>
    <property type="match status" value="1"/>
</dbReference>
<dbReference type="PROSITE" id="PS01315">
    <property type="entry name" value="CDS"/>
    <property type="match status" value="1"/>
</dbReference>
<gene>
    <name type="primary">CDS1</name>
    <name type="synonym">CDG1</name>
    <name type="ordered locus">YBR029C</name>
    <name type="ORF">YBR0313</name>
</gene>
<evidence type="ECO:0000255" key="1"/>
<evidence type="ECO:0000269" key="2">
    <source>
    </source>
</evidence>
<evidence type="ECO:0000269" key="3">
    <source>
    </source>
</evidence>
<evidence type="ECO:0000269" key="4">
    <source>
    </source>
</evidence>
<evidence type="ECO:0000305" key="5"/>
<comment type="function">
    <text evidence="2 3">Supplies CDP-diacylglycerol, which may play an important role as both a precursor to phosphoinositide biosynthesis in the plasma membrane and as a negative effector of phosphatidylinositol 4-kinase activity, thereby exerting an effect on cell proliferation via a lipid-dependent signal transduction cascade.</text>
</comment>
<comment type="catalytic activity">
    <reaction evidence="2">
        <text>a 1,2-diacyl-sn-glycero-3-phosphate + CTP + H(+) = a CDP-1,2-diacyl-sn-glycerol + diphosphate</text>
        <dbReference type="Rhea" id="RHEA:16229"/>
        <dbReference type="ChEBI" id="CHEBI:15378"/>
        <dbReference type="ChEBI" id="CHEBI:33019"/>
        <dbReference type="ChEBI" id="CHEBI:37563"/>
        <dbReference type="ChEBI" id="CHEBI:58332"/>
        <dbReference type="ChEBI" id="CHEBI:58608"/>
        <dbReference type="EC" id="2.7.7.41"/>
    </reaction>
</comment>
<comment type="cofactor">
    <cofactor evidence="2">
        <name>Mg(2+)</name>
        <dbReference type="ChEBI" id="CHEBI:18420"/>
    </cofactor>
</comment>
<comment type="biophysicochemical properties">
    <kinetics>
        <KM evidence="2">1 mM for CTP</KM>
        <KM evidence="2">0.5 mM for phosphatidate</KM>
        <Vmax evidence="2">4700.0 nmol/min/mg enzyme</Vmax>
    </kinetics>
    <phDependence>
        <text evidence="2">Optimum pH is 6.5.</text>
    </phDependence>
</comment>
<comment type="pathway">
    <text>Phospholipid metabolism; CDP-diacylglycerol biosynthesis; CDP-diacylglycerol from sn-glycerol 3-phosphate: step 3/3.</text>
</comment>
<comment type="subunit">
    <text>Homodimer.</text>
</comment>
<comment type="subcellular location">
    <subcellularLocation>
        <location>Endoplasmic reticulum membrane</location>
        <topology>Multi-pass membrane protein</topology>
    </subcellularLocation>
    <subcellularLocation>
        <location>Cytoplasmic vesicle</location>
        <location>Secretory vesicle</location>
    </subcellularLocation>
    <text>Exclusively present in the ER, and not in mitochondria. Also associated with post-Golgi apparatus secretory vesicles destined for the plasma membrane.</text>
</comment>
<comment type="similarity">
    <text evidence="5">Belongs to the CDS family.</text>
</comment>
<sequence>MSDNPEMKPHGTSKEIVESVTDATSKAIDKLQEELHKDASESVTPVTKESTAATKESRKYNFFIRTVWTFVMISGFFITLASGHAWCIVLILGCQIATFKECIAVTSASGREKNLPLTKTLNWYLLFTTIYYLDGKSLFKFFQATFYEYPVLNFIVTNHKFICYCLYLMGFVLFVCSLRKGFLKFQFGSLCVTHMVLLLVVFQAHLIIKNVLNGLFWFLLPCGLVIVNDIFAYLCGITFGKTKLIEISPKKTLEGFLGAWFFTALASIILTRILSPYTYLTCPVEDLHTNFFSNLTCELNPVFLPQVYRLPPIFFDKVQINSITVKPIYFHALNLATFASLFAPFGGFFASGLKRTFKVKDFGHSIPGHGGITDRVDCQFIMGSFANLYYETFISEHRITVDTVLSTILMNLNDKQIIELIDILIRFLSKKGIISAKNFEKLADIFNVTKKSLTNHS</sequence>
<reference key="1">
    <citation type="journal article" date="1996" name="J. Biol. Chem.">
        <title>The CDS1 gene encoding CDP-diacylglycerol synthase in Saccharomyces cerevisiae is essential for cell growth.</title>
        <authorList>
            <person name="Shen H."/>
            <person name="Heacock P.N."/>
            <person name="Clancey C.J."/>
            <person name="Dowhan W."/>
        </authorList>
    </citation>
    <scope>NUCLEOTIDE SEQUENCE [GENOMIC DNA]</scope>
    <scope>FUNCTION</scope>
</reference>
<reference key="2">
    <citation type="journal article" date="1994" name="Yeast">
        <title>The complete sequence of a 33 kb fragment on the right arm of chromosome II from Saccharomyces cerevisiae reveals 16 open reading frames, including ten new open reading frames, five previously identified genes and a homologue of the SCO1 gene.</title>
        <authorList>
            <person name="Smits P.H.M."/>
            <person name="de Haan M."/>
            <person name="Maat C."/>
            <person name="Grivell L.A."/>
        </authorList>
    </citation>
    <scope>NUCLEOTIDE SEQUENCE [GENOMIC DNA]</scope>
    <source>
        <strain>ATCC 204508 / S288c</strain>
    </source>
</reference>
<reference key="3">
    <citation type="journal article" date="1994" name="EMBO J.">
        <title>Complete DNA sequence of yeast chromosome II.</title>
        <authorList>
            <person name="Feldmann H."/>
            <person name="Aigle M."/>
            <person name="Aljinovic G."/>
            <person name="Andre B."/>
            <person name="Baclet M.C."/>
            <person name="Barthe C."/>
            <person name="Baur A."/>
            <person name="Becam A.-M."/>
            <person name="Biteau N."/>
            <person name="Boles E."/>
            <person name="Brandt T."/>
            <person name="Brendel M."/>
            <person name="Brueckner M."/>
            <person name="Bussereau F."/>
            <person name="Christiansen C."/>
            <person name="Contreras R."/>
            <person name="Crouzet M."/>
            <person name="Cziepluch C."/>
            <person name="Demolis N."/>
            <person name="Delaveau T."/>
            <person name="Doignon F."/>
            <person name="Domdey H."/>
            <person name="Duesterhus S."/>
            <person name="Dubois E."/>
            <person name="Dujon B."/>
            <person name="El Bakkoury M."/>
            <person name="Entian K.-D."/>
            <person name="Feuermann M."/>
            <person name="Fiers W."/>
            <person name="Fobo G.M."/>
            <person name="Fritz C."/>
            <person name="Gassenhuber J."/>
            <person name="Glansdorff N."/>
            <person name="Goffeau A."/>
            <person name="Grivell L.A."/>
            <person name="de Haan M."/>
            <person name="Hein C."/>
            <person name="Herbert C.J."/>
            <person name="Hollenberg C.P."/>
            <person name="Holmstroem K."/>
            <person name="Jacq C."/>
            <person name="Jacquet M."/>
            <person name="Jauniaux J.-C."/>
            <person name="Jonniaux J.-L."/>
            <person name="Kallesoee T."/>
            <person name="Kiesau P."/>
            <person name="Kirchrath L."/>
            <person name="Koetter P."/>
            <person name="Korol S."/>
            <person name="Liebl S."/>
            <person name="Logghe M."/>
            <person name="Lohan A.J.E."/>
            <person name="Louis E.J."/>
            <person name="Li Z.Y."/>
            <person name="Maat M.J."/>
            <person name="Mallet L."/>
            <person name="Mannhaupt G."/>
            <person name="Messenguy F."/>
            <person name="Miosga T."/>
            <person name="Molemans F."/>
            <person name="Mueller S."/>
            <person name="Nasr F."/>
            <person name="Obermaier B."/>
            <person name="Perea J."/>
            <person name="Pierard A."/>
            <person name="Piravandi E."/>
            <person name="Pohl F.M."/>
            <person name="Pohl T.M."/>
            <person name="Potier S."/>
            <person name="Proft M."/>
            <person name="Purnelle B."/>
            <person name="Ramezani Rad M."/>
            <person name="Rieger M."/>
            <person name="Rose M."/>
            <person name="Schaaff-Gerstenschlaeger I."/>
            <person name="Scherens B."/>
            <person name="Schwarzlose C."/>
            <person name="Skala J."/>
            <person name="Slonimski P.P."/>
            <person name="Smits P.H.M."/>
            <person name="Souciet J.-L."/>
            <person name="Steensma H.Y."/>
            <person name="Stucka R."/>
            <person name="Urrestarazu L.A."/>
            <person name="van der Aart Q.J.M."/>
            <person name="Van Dyck L."/>
            <person name="Vassarotti A."/>
            <person name="Vetter I."/>
            <person name="Vierendeels F."/>
            <person name="Vissers S."/>
            <person name="Wagner G."/>
            <person name="de Wergifosse P."/>
            <person name="Wolfe K.H."/>
            <person name="Zagulski M."/>
            <person name="Zimmermann F.K."/>
            <person name="Mewes H.-W."/>
            <person name="Kleine K."/>
        </authorList>
    </citation>
    <scope>NUCLEOTIDE SEQUENCE [LARGE SCALE GENOMIC DNA]</scope>
    <source>
        <strain>ATCC 204508 / S288c</strain>
    </source>
</reference>
<reference key="4">
    <citation type="journal article" date="2014" name="G3 (Bethesda)">
        <title>The reference genome sequence of Saccharomyces cerevisiae: Then and now.</title>
        <authorList>
            <person name="Engel S.R."/>
            <person name="Dietrich F.S."/>
            <person name="Fisk D.G."/>
            <person name="Binkley G."/>
            <person name="Balakrishnan R."/>
            <person name="Costanzo M.C."/>
            <person name="Dwight S.S."/>
            <person name="Hitz B.C."/>
            <person name="Karra K."/>
            <person name="Nash R.S."/>
            <person name="Weng S."/>
            <person name="Wong E.D."/>
            <person name="Lloyd P."/>
            <person name="Skrzypek M.S."/>
            <person name="Miyasato S.R."/>
            <person name="Simison M."/>
            <person name="Cherry J.M."/>
        </authorList>
    </citation>
    <scope>GENOME REANNOTATION</scope>
    <source>
        <strain>ATCC 204508 / S288c</strain>
    </source>
</reference>
<reference key="5">
    <citation type="journal article" date="2007" name="Genome Res.">
        <title>Approaching a complete repository of sequence-verified protein-encoding clones for Saccharomyces cerevisiae.</title>
        <authorList>
            <person name="Hu Y."/>
            <person name="Rolfs A."/>
            <person name="Bhullar B."/>
            <person name="Murthy T.V.S."/>
            <person name="Zhu C."/>
            <person name="Berger M.F."/>
            <person name="Camargo A.A."/>
            <person name="Kelley F."/>
            <person name="McCarron S."/>
            <person name="Jepson D."/>
            <person name="Richardson A."/>
            <person name="Raphael J."/>
            <person name="Moreira D."/>
            <person name="Taycher E."/>
            <person name="Zuo D."/>
            <person name="Mohr S."/>
            <person name="Kane M.F."/>
            <person name="Williamson J."/>
            <person name="Simpson A.J.G."/>
            <person name="Bulyk M.L."/>
            <person name="Harlow E."/>
            <person name="Marsischky G."/>
            <person name="Kolodner R.D."/>
            <person name="LaBaer J."/>
        </authorList>
    </citation>
    <scope>NUCLEOTIDE SEQUENCE [GENOMIC DNA]</scope>
    <source>
        <strain>ATCC 204508 / S288c</strain>
    </source>
</reference>
<reference key="6">
    <citation type="journal article" date="1987" name="J. Biol. Chem.">
        <title>Purification and characterization of CDP-diacylglycerol synthase from Saccharomyces cerevisiae.</title>
        <authorList>
            <person name="Kelley M.J."/>
            <person name="Carman G.M."/>
        </authorList>
    </citation>
    <scope>FUNCTION</scope>
    <scope>CATALYTIC ACTIVITY</scope>
    <scope>COFACTOR</scope>
    <scope>BIOPHYSICOCHEMICAL PROPERTIES</scope>
    <source>
        <strain>ATCC 204508 / S288c</strain>
    </source>
</reference>
<reference key="7">
    <citation type="journal article" date="1990" name="J. Bacteriol.">
        <title>Enzymes of phosphoinositide synthesis in secretory vesicles destined for the plasma membrane in Saccharomyces cerevisiae.</title>
        <authorList>
            <person name="Kinney A.J."/>
            <person name="Carman G.M."/>
        </authorList>
    </citation>
    <scope>SUBCELLULAR LOCATION</scope>
</reference>
<reference key="8">
    <citation type="journal article" date="1996" name="J. Biol. Chem.">
        <title>Reduction of CDP-diacylglycerol synthase activity results in the excretion of inositol by Saccharomyces cerevisiae.</title>
        <authorList>
            <person name="Shen H."/>
            <person name="Dowhan W."/>
        </authorList>
    </citation>
    <scope>MUTAGENESIS OF CYS-102</scope>
</reference>
<reference key="9">
    <citation type="journal article" date="2013" name="Cell Metab.">
        <title>Tam41 is a CDP-diacylglycerol synthase required for cardiolipin biosynthesis in mitochondria.</title>
        <authorList>
            <person name="Tamura Y."/>
            <person name="Harada Y."/>
            <person name="Nishikawa S."/>
            <person name="Yamano K."/>
            <person name="Kamiya M."/>
            <person name="Shiota T."/>
            <person name="Kuroda T."/>
            <person name="Kuge O."/>
            <person name="Sesaki H."/>
            <person name="Imai K."/>
            <person name="Tomii K."/>
            <person name="Endo T."/>
        </authorList>
    </citation>
    <scope>SUBCELLULAR LOCATION</scope>
</reference>